<keyword id="KW-0002">3D-structure</keyword>
<keyword id="KW-0274">FAD</keyword>
<keyword id="KW-0285">Flavoprotein</keyword>
<keyword id="KW-0378">Hydrolase</keyword>
<keyword id="KW-1185">Reference proteome</keyword>
<reference key="1">
    <citation type="journal article" date="2013" name="J. Bacteriol.">
        <title>A novel 3-sulfinopropionyl coenzyme A (3SP-CoA) desulfinase from Advenella mimigardefordensis strain DPN7T acting as a key enzyme during catabolism of 3,3'-dithiodipropionic acid is a member of the acyl-CoA dehydrogenase superfamily.</title>
        <authorList>
            <person name="Schurmann M."/>
            <person name="Deters A."/>
            <person name="Wubbeler J.H."/>
            <person name="Steinbuchel A."/>
        </authorList>
    </citation>
    <scope>NUCLEOTIDE SEQUENCE [GENOMIC DNA]</scope>
    <scope>FUNCTION</scope>
    <scope>CATALYTIC ACTIVITY</scope>
    <scope>COFACTOR</scope>
    <scope>BIOPHYSICOCHEMICAL PROPERTIES</scope>
    <scope>SUBUNIT</scope>
    <scope>DISRUPTION PHENOTYPE</scope>
    <source>
        <strain>DSM 17166 / LMG 22922 / DPN7</strain>
    </source>
</reference>
<reference key="2">
    <citation type="journal article" date="2014" name="Microbiology">
        <title>Unravelling the complete genome sequence of Advenella mimigardefordensis strain DPN7T and novel insights in the catabolism of the xenobiotic polythioester precursor 3,3'-dithiodipropionate.</title>
        <authorList>
            <person name="Wubbeler J.H."/>
            <person name="Hiessl S."/>
            <person name="Schuldes J."/>
            <person name="Thurmer A."/>
            <person name="Daniel R."/>
            <person name="Steinbuchel A."/>
        </authorList>
    </citation>
    <scope>NUCLEOTIDE SEQUENCE [LARGE SCALE GENOMIC DNA]</scope>
    <source>
        <strain>DSM 17166 / LMG 22922 / DPN7</strain>
    </source>
</reference>
<reference evidence="7 8" key="3">
    <citation type="journal article" date="2015" name="Acta Crystallogr. D">
        <title>3-Sulfinopropionyl-coenzyme A (3SP-CoA) desulfinase from Advenella mimigardefordensis DPN7(T): crystal structure and function of a desulfinase with an acyl-CoA dehydrogenase fold.</title>
        <authorList>
            <person name="Schurmann M."/>
            <person name="Meijers R."/>
            <person name="Schneider T.R."/>
            <person name="Steinbuchel A."/>
            <person name="Cianci M."/>
        </authorList>
    </citation>
    <scope>X-RAY CRYSTALLOGRAPHY (1.89 ANGSTROMS) IN COMPLEXES WITH FAD AND SUCCINYL-COA</scope>
    <scope>FUNCTION</scope>
    <scope>CATALYTIC ACTIVITY</scope>
    <scope>COFACTOR</scope>
    <scope>SUBUNIT</scope>
    <scope>MUTAGENESIS OF ARG-84 AND GLN-246</scope>
    <source>
        <strain>DSM 17166 / LMG 22922 / DPN7</strain>
    </source>
</reference>
<comment type="function">
    <text evidence="1 2">Catalyzes the conversion 3-sulfinopropanoyl-CoA (3SP-CoA) to propanoyl-CoA by abstraction of sulfite (PubMed:23354747, PubMed:26057676). Does not show dehydrogenase activity (PubMed:23354747). Involved in the degradation of 3,3'-dithiodipropionate (DTDP), a sulfur-containing precursor substrate for biosynthesis of polythioesters (PTEs) (PubMed:23354747).</text>
</comment>
<comment type="catalytic activity">
    <reaction evidence="1 2">
        <text>3-sulfinopropanoyl-CoA + H2O = propanoyl-CoA + sulfite + H(+)</text>
        <dbReference type="Rhea" id="RHEA:41624"/>
        <dbReference type="ChEBI" id="CHEBI:15377"/>
        <dbReference type="ChEBI" id="CHEBI:15378"/>
        <dbReference type="ChEBI" id="CHEBI:17359"/>
        <dbReference type="ChEBI" id="CHEBI:57392"/>
        <dbReference type="ChEBI" id="CHEBI:78349"/>
        <dbReference type="EC" id="3.13.1.4"/>
    </reaction>
    <physiologicalReaction direction="left-to-right" evidence="1 2">
        <dbReference type="Rhea" id="RHEA:41625"/>
    </physiologicalReaction>
</comment>
<comment type="cofactor">
    <cofactor evidence="1 2">
        <name>FAD</name>
        <dbReference type="ChEBI" id="CHEBI:57692"/>
    </cofactor>
    <text evidence="2">Binds 1 FAD per subunit.</text>
</comment>
<comment type="biophysicochemical properties">
    <kinetics>
        <KM evidence="1">0.013 mM for 3SP-CoA</KM>
        <Vmax evidence="1">4.19 umol/min/mg enzyme</Vmax>
        <text evidence="1">kcat is 3.13 sec(-1).</text>
    </kinetics>
</comment>
<comment type="subunit">
    <text evidence="1 2">Homotetramer.</text>
</comment>
<comment type="disruption phenotype">
    <text evidence="1">Deletion of the gene completely impairs growth on DTDP or 3-sulfinopropanoyl (3SP) as the sole carbon source.</text>
</comment>
<comment type="miscellaneous">
    <text evidence="1">Does not catalyze the dehydrogenation of acyl-CoA thioesters (PubMed:23354747). The absence of dehydrogenase activity is most probably caused by the absence of a catalytic glutamate residue in either of the two positions conserved throughout the acyl-CoA dehydrogenase family (PubMed:23354747).</text>
</comment>
<comment type="similarity">
    <text evidence="4">Belongs to the acyl-CoA dehydrogenase family.</text>
</comment>
<evidence type="ECO:0000269" key="1">
    <source>
    </source>
</evidence>
<evidence type="ECO:0000269" key="2">
    <source>
    </source>
</evidence>
<evidence type="ECO:0000303" key="3">
    <source>
    </source>
</evidence>
<evidence type="ECO:0000305" key="4"/>
<evidence type="ECO:0000305" key="5">
    <source>
    </source>
</evidence>
<evidence type="ECO:0000312" key="6">
    <source>
        <dbReference type="EMBL" id="AHG65203.1"/>
    </source>
</evidence>
<evidence type="ECO:0007744" key="7">
    <source>
        <dbReference type="PDB" id="5AF7"/>
    </source>
</evidence>
<evidence type="ECO:0007744" key="8">
    <source>
        <dbReference type="PDB" id="5AHS"/>
    </source>
</evidence>
<evidence type="ECO:0007829" key="9">
    <source>
        <dbReference type="PDB" id="5AF7"/>
    </source>
</evidence>
<gene>
    <name evidence="3" type="primary">acd</name>
    <name evidence="6" type="ORF">MIM_c31390</name>
</gene>
<dbReference type="EC" id="3.13.1.4" evidence="1 2"/>
<dbReference type="EMBL" id="JX535522">
    <property type="protein sequence ID" value="AFV08642.1"/>
    <property type="molecule type" value="Genomic_DNA"/>
</dbReference>
<dbReference type="EMBL" id="CP003915">
    <property type="protein sequence ID" value="AHG65203.1"/>
    <property type="molecule type" value="Genomic_DNA"/>
</dbReference>
<dbReference type="RefSeq" id="WP_025373864.1">
    <property type="nucleotide sequence ID" value="NZ_CP003915.1"/>
</dbReference>
<dbReference type="PDB" id="5AF7">
    <property type="method" value="X-ray"/>
    <property type="resolution" value="1.89 A"/>
    <property type="chains" value="A/B=1-401"/>
</dbReference>
<dbReference type="PDB" id="5AHS">
    <property type="method" value="X-ray"/>
    <property type="resolution" value="2.30 A"/>
    <property type="chains" value="A/B/C/D/E/F=1-401"/>
</dbReference>
<dbReference type="PDBsum" id="5AF7"/>
<dbReference type="PDBsum" id="5AHS"/>
<dbReference type="SMR" id="K4L7X3"/>
<dbReference type="STRING" id="1247726.MIM_c31390"/>
<dbReference type="KEGG" id="amim:MIM_c31390"/>
<dbReference type="PATRIC" id="fig|1247726.3.peg.3460"/>
<dbReference type="eggNOG" id="COG1960">
    <property type="taxonomic scope" value="Bacteria"/>
</dbReference>
<dbReference type="HOGENOM" id="CLU_018204_0_2_4"/>
<dbReference type="OrthoDB" id="7807987at2"/>
<dbReference type="BioCyc" id="MetaCyc:MONOMER-18550"/>
<dbReference type="BRENDA" id="3.13.1.4">
    <property type="organism ID" value="10048"/>
</dbReference>
<dbReference type="EvolutionaryTrace" id="K4L7X3"/>
<dbReference type="Proteomes" id="UP000019095">
    <property type="component" value="Chromosome"/>
</dbReference>
<dbReference type="GO" id="GO:0003995">
    <property type="term" value="F:acyl-CoA dehydrogenase activity"/>
    <property type="evidence" value="ECO:0007669"/>
    <property type="project" value="TreeGrafter"/>
</dbReference>
<dbReference type="GO" id="GO:0050660">
    <property type="term" value="F:flavin adenine dinucleotide binding"/>
    <property type="evidence" value="ECO:0007669"/>
    <property type="project" value="InterPro"/>
</dbReference>
<dbReference type="GO" id="GO:0016787">
    <property type="term" value="F:hydrolase activity"/>
    <property type="evidence" value="ECO:0007669"/>
    <property type="project" value="UniProtKB-KW"/>
</dbReference>
<dbReference type="FunFam" id="1.20.140.10:FF:000004">
    <property type="entry name" value="Acyl-CoA dehydrogenase FadE25"/>
    <property type="match status" value="1"/>
</dbReference>
<dbReference type="Gene3D" id="1.10.540.10">
    <property type="entry name" value="Acyl-CoA dehydrogenase/oxidase, N-terminal domain"/>
    <property type="match status" value="1"/>
</dbReference>
<dbReference type="Gene3D" id="2.40.110.10">
    <property type="entry name" value="Butyryl-CoA Dehydrogenase, subunit A, domain 2"/>
    <property type="match status" value="1"/>
</dbReference>
<dbReference type="Gene3D" id="1.20.140.10">
    <property type="entry name" value="Butyryl-CoA Dehydrogenase, subunit A, domain 3"/>
    <property type="match status" value="1"/>
</dbReference>
<dbReference type="InterPro" id="IPR050032">
    <property type="entry name" value="AcdA"/>
</dbReference>
<dbReference type="InterPro" id="IPR006091">
    <property type="entry name" value="Acyl-CoA_Oxase/DH_mid-dom"/>
</dbReference>
<dbReference type="InterPro" id="IPR046373">
    <property type="entry name" value="Acyl-CoA_Oxase/DH_mid-dom_sf"/>
</dbReference>
<dbReference type="InterPro" id="IPR036250">
    <property type="entry name" value="AcylCo_DH-like_C"/>
</dbReference>
<dbReference type="InterPro" id="IPR009075">
    <property type="entry name" value="AcylCo_DH/oxidase_C"/>
</dbReference>
<dbReference type="InterPro" id="IPR013786">
    <property type="entry name" value="AcylCoA_DH/ox_N"/>
</dbReference>
<dbReference type="InterPro" id="IPR037069">
    <property type="entry name" value="AcylCoA_DH/ox_N_sf"/>
</dbReference>
<dbReference type="InterPro" id="IPR009100">
    <property type="entry name" value="AcylCoA_DH/oxidase_NM_dom_sf"/>
</dbReference>
<dbReference type="NCBIfam" id="NF042439">
    <property type="entry name" value="SulpropCoADesulf"/>
    <property type="match status" value="1"/>
</dbReference>
<dbReference type="PANTHER" id="PTHR43884">
    <property type="entry name" value="ACYL-COA DEHYDROGENASE"/>
    <property type="match status" value="1"/>
</dbReference>
<dbReference type="PANTHER" id="PTHR43884:SF12">
    <property type="entry name" value="ISOVALERYL-COA DEHYDROGENASE, MITOCHONDRIAL-RELATED"/>
    <property type="match status" value="1"/>
</dbReference>
<dbReference type="Pfam" id="PF00441">
    <property type="entry name" value="Acyl-CoA_dh_1"/>
    <property type="match status" value="1"/>
</dbReference>
<dbReference type="Pfam" id="PF02770">
    <property type="entry name" value="Acyl-CoA_dh_M"/>
    <property type="match status" value="1"/>
</dbReference>
<dbReference type="Pfam" id="PF02771">
    <property type="entry name" value="Acyl-CoA_dh_N"/>
    <property type="match status" value="1"/>
</dbReference>
<dbReference type="PIRSF" id="PIRSF016578">
    <property type="entry name" value="HsaA"/>
    <property type="match status" value="1"/>
</dbReference>
<dbReference type="SUPFAM" id="SSF47203">
    <property type="entry name" value="Acyl-CoA dehydrogenase C-terminal domain-like"/>
    <property type="match status" value="1"/>
</dbReference>
<dbReference type="SUPFAM" id="SSF56645">
    <property type="entry name" value="Acyl-CoA dehydrogenase NM domain-like"/>
    <property type="match status" value="1"/>
</dbReference>
<sequence length="401" mass="43531">MYELTPEQRTLQTQARELAQSVFASTAVQTDLTEQYPWDNVAQLRDAGFMGMMLPTSVGGRGLSTLDTVIVIEEMAKACATMGRITVDSNLGAIGAITKYGSEEQIKLAADLVLAGDKPAICISEPNAGSAASEMTTRADKNGDHYILNGEKYWITGGGVSKLHLIFARVFDDGVEQGIGAFITVLDDHGPEGLKVGRRLYAMGVRGIPETHLEFHDLKIHKSMMITFPDGLKRGFAALMSAYNAQRVGAGAVALGIAQCAFEEGVAYLKRREQFGRPLAEFQGLQWMVADMSVQLEAARLMLRSAAVSGETFPDINKAAQAKIFAAETANKVTNDALQFFGSSGYGRHNPMERHVRDARMFTIAGGTAQILRTQVASKILDMKLPQTRDGYLKAAQNSKR</sequence>
<accession>K4L7X3</accession>
<protein>
    <recommendedName>
        <fullName evidence="4">3-sulfinopropanoyl-CoA desulfinase</fullName>
        <ecNumber evidence="1 2">3.13.1.4</ecNumber>
    </recommendedName>
    <alternativeName>
        <fullName evidence="3">3-sulfinopropionyl coenzyme A desulfinase</fullName>
        <shortName evidence="4">3-sulfinopropionyl-CoA desulfinase</shortName>
        <shortName evidence="4">3SP-CoA desulfinase</shortName>
    </alternativeName>
</protein>
<organism>
    <name type="scientific">Advenella mimigardefordensis (strain DSM 17166 / LMG 22922 / DPN7)</name>
    <dbReference type="NCBI Taxonomy" id="1247726"/>
    <lineage>
        <taxon>Bacteria</taxon>
        <taxon>Pseudomonadati</taxon>
        <taxon>Pseudomonadota</taxon>
        <taxon>Betaproteobacteria</taxon>
        <taxon>Burkholderiales</taxon>
        <taxon>Alcaligenaceae</taxon>
    </lineage>
</organism>
<feature type="chain" id="PRO_0000452007" description="3-sulfinopropanoyl-CoA desulfinase">
    <location>
        <begin position="1"/>
        <end position="401"/>
    </location>
</feature>
<feature type="binding site" evidence="2 7 8">
    <location>
        <begin position="121"/>
        <end position="124"/>
    </location>
    <ligand>
        <name>FAD</name>
        <dbReference type="ChEBI" id="CHEBI:57692"/>
    </ligand>
</feature>
<feature type="binding site" evidence="2 7 8">
    <location>
        <position position="130"/>
    </location>
    <ligand>
        <name>FAD</name>
        <dbReference type="ChEBI" id="CHEBI:57692"/>
    </ligand>
</feature>
<feature type="binding site" evidence="2 7 8">
    <location>
        <begin position="153"/>
        <end position="156"/>
    </location>
    <ligand>
        <name>FAD</name>
        <dbReference type="ChEBI" id="CHEBI:57692"/>
    </ligand>
</feature>
<feature type="binding site" evidence="5">
    <location>
        <begin position="243"/>
        <end position="244"/>
    </location>
    <ligand>
        <name>substrate</name>
    </ligand>
</feature>
<feature type="binding site" evidence="2 7 8">
    <location>
        <position position="272"/>
    </location>
    <ligand>
        <name>FAD</name>
        <dbReference type="ChEBI" id="CHEBI:57692"/>
    </ligand>
</feature>
<feature type="binding site" evidence="2 7 8">
    <location>
        <position position="339"/>
    </location>
    <ligand>
        <name>FAD</name>
        <dbReference type="ChEBI" id="CHEBI:57692"/>
    </ligand>
</feature>
<feature type="binding site" evidence="2 7 8">
    <location>
        <position position="343"/>
    </location>
    <ligand>
        <name>FAD</name>
        <dbReference type="ChEBI" id="CHEBI:57692"/>
    </ligand>
</feature>
<feature type="binding site" evidence="2 7 8">
    <location>
        <begin position="366"/>
        <end position="370"/>
    </location>
    <ligand>
        <name>FAD</name>
        <dbReference type="ChEBI" id="CHEBI:57692"/>
    </ligand>
</feature>
<feature type="binding site" evidence="2 7 8">
    <location>
        <position position="387"/>
    </location>
    <ligand>
        <name>FAD</name>
        <dbReference type="ChEBI" id="CHEBI:57692"/>
    </ligand>
</feature>
<feature type="site" description="Important for activity" evidence="2">
    <location>
        <position position="84"/>
    </location>
</feature>
<feature type="mutagenesis site" description="Loss of activity." evidence="2">
    <original>R</original>
    <variation>K</variation>
    <location>
        <position position="84"/>
    </location>
</feature>
<feature type="mutagenesis site" description="Slight decrease in catalytic efficiency, but still acts as a desulfinase. Does not gain acyl-CoA dehydrogenase activity." evidence="2">
    <original>Q</original>
    <variation>E</variation>
    <location>
        <position position="246"/>
    </location>
</feature>
<feature type="helix" evidence="9">
    <location>
        <begin position="6"/>
        <end position="21"/>
    </location>
</feature>
<feature type="helix" evidence="9">
    <location>
        <begin position="24"/>
        <end position="26"/>
    </location>
</feature>
<feature type="helix" evidence="9">
    <location>
        <begin position="27"/>
        <end position="33"/>
    </location>
</feature>
<feature type="helix" evidence="9">
    <location>
        <begin position="38"/>
        <end position="46"/>
    </location>
</feature>
<feature type="helix" evidence="9">
    <location>
        <begin position="56"/>
        <end position="58"/>
    </location>
</feature>
<feature type="helix" evidence="9">
    <location>
        <begin position="65"/>
        <end position="78"/>
    </location>
</feature>
<feature type="helix" evidence="9">
    <location>
        <begin position="80"/>
        <end position="88"/>
    </location>
</feature>
<feature type="helix" evidence="9">
    <location>
        <begin position="93"/>
        <end position="100"/>
    </location>
</feature>
<feature type="helix" evidence="9">
    <location>
        <begin position="103"/>
        <end position="114"/>
    </location>
</feature>
<feature type="strand" evidence="9">
    <location>
        <begin position="120"/>
        <end position="122"/>
    </location>
</feature>
<feature type="strand" evidence="9">
    <location>
        <begin position="128"/>
        <end position="131"/>
    </location>
</feature>
<feature type="helix" evidence="9">
    <location>
        <begin position="132"/>
        <end position="134"/>
    </location>
</feature>
<feature type="strand" evidence="9">
    <location>
        <begin position="138"/>
        <end position="142"/>
    </location>
</feature>
<feature type="strand" evidence="9">
    <location>
        <begin position="145"/>
        <end position="156"/>
    </location>
</feature>
<feature type="turn" evidence="9">
    <location>
        <begin position="157"/>
        <end position="160"/>
    </location>
</feature>
<feature type="strand" evidence="9">
    <location>
        <begin position="163"/>
        <end position="172"/>
    </location>
</feature>
<feature type="strand" evidence="9">
    <location>
        <begin position="175"/>
        <end position="185"/>
    </location>
</feature>
<feature type="strand" evidence="9">
    <location>
        <begin position="194"/>
        <end position="199"/>
    </location>
</feature>
<feature type="strand" evidence="9">
    <location>
        <begin position="202"/>
        <end position="204"/>
    </location>
</feature>
<feature type="strand" evidence="9">
    <location>
        <begin position="210"/>
        <end position="221"/>
    </location>
</feature>
<feature type="helix" evidence="9">
    <location>
        <begin position="222"/>
        <end position="224"/>
    </location>
</feature>
<feature type="helix" evidence="9">
    <location>
        <begin position="232"/>
        <end position="240"/>
    </location>
</feature>
<feature type="helix" evidence="9">
    <location>
        <begin position="242"/>
        <end position="271"/>
    </location>
</feature>
<feature type="helix" evidence="9">
    <location>
        <begin position="279"/>
        <end position="281"/>
    </location>
</feature>
<feature type="helix" evidence="9">
    <location>
        <begin position="283"/>
        <end position="308"/>
    </location>
</feature>
<feature type="strand" evidence="9">
    <location>
        <begin position="309"/>
        <end position="313"/>
    </location>
</feature>
<feature type="helix" evidence="9">
    <location>
        <begin position="316"/>
        <end position="340"/>
    </location>
</feature>
<feature type="helix" evidence="9">
    <location>
        <begin position="343"/>
        <end position="346"/>
    </location>
</feature>
<feature type="helix" evidence="9">
    <location>
        <begin position="352"/>
        <end position="359"/>
    </location>
</feature>
<feature type="helix" evidence="9">
    <location>
        <begin position="360"/>
        <end position="363"/>
    </location>
</feature>
<feature type="turn" evidence="9">
    <location>
        <begin position="364"/>
        <end position="366"/>
    </location>
</feature>
<feature type="helix" evidence="9">
    <location>
        <begin position="369"/>
        <end position="380"/>
    </location>
</feature>
<name>SPCAD_ADVMD</name>
<proteinExistence type="evidence at protein level"/>